<evidence type="ECO:0000255" key="1">
    <source>
        <dbReference type="HAMAP-Rule" id="MF_01342"/>
    </source>
</evidence>
<evidence type="ECO:0000305" key="2"/>
<organism>
    <name type="scientific">Treponema pallidum subsp. pallidum (strain SS14)</name>
    <dbReference type="NCBI Taxonomy" id="455434"/>
    <lineage>
        <taxon>Bacteria</taxon>
        <taxon>Pseudomonadati</taxon>
        <taxon>Spirochaetota</taxon>
        <taxon>Spirochaetia</taxon>
        <taxon>Spirochaetales</taxon>
        <taxon>Treponemataceae</taxon>
        <taxon>Treponema</taxon>
    </lineage>
</organism>
<reference key="1">
    <citation type="journal article" date="2008" name="BMC Microbiol.">
        <title>Complete genome sequence of Treponema pallidum ssp. pallidum strain SS14 determined with oligonucleotide arrays.</title>
        <authorList>
            <person name="Matejkova P."/>
            <person name="Strouhal M."/>
            <person name="Smajs D."/>
            <person name="Norris S.J."/>
            <person name="Palzkill T."/>
            <person name="Petrosino J.F."/>
            <person name="Sodergren E."/>
            <person name="Norton J.E."/>
            <person name="Singh J."/>
            <person name="Richmond T.A."/>
            <person name="Molla M.N."/>
            <person name="Albert T.J."/>
            <person name="Weinstock G.M."/>
        </authorList>
    </citation>
    <scope>NUCLEOTIDE SEQUENCE [LARGE SCALE GENOMIC DNA]</scope>
    <source>
        <strain>SS14</strain>
    </source>
</reference>
<comment type="function">
    <text evidence="1">Binds 23S rRNA and is also seen to make contacts with the A and possibly P site tRNAs.</text>
</comment>
<comment type="subunit">
    <text evidence="1">Part of the 50S ribosomal subunit.</text>
</comment>
<comment type="similarity">
    <text evidence="1">Belongs to the universal ribosomal protein uL16 family.</text>
</comment>
<name>RL16_TREPS</name>
<proteinExistence type="inferred from homology"/>
<dbReference type="EMBL" id="CP000805">
    <property type="protein sequence ID" value="ACD70622.1"/>
    <property type="molecule type" value="Genomic_DNA"/>
</dbReference>
<dbReference type="RefSeq" id="WP_010881643.1">
    <property type="nucleotide sequence ID" value="NC_021508.1"/>
</dbReference>
<dbReference type="SMR" id="B2S2E3"/>
<dbReference type="GeneID" id="93875984"/>
<dbReference type="KEGG" id="tpp:TPASS_0196"/>
<dbReference type="PATRIC" id="fig|455434.6.peg.199"/>
<dbReference type="Proteomes" id="UP000001202">
    <property type="component" value="Chromosome"/>
</dbReference>
<dbReference type="GO" id="GO:0022625">
    <property type="term" value="C:cytosolic large ribosomal subunit"/>
    <property type="evidence" value="ECO:0007669"/>
    <property type="project" value="TreeGrafter"/>
</dbReference>
<dbReference type="GO" id="GO:0019843">
    <property type="term" value="F:rRNA binding"/>
    <property type="evidence" value="ECO:0007669"/>
    <property type="project" value="UniProtKB-UniRule"/>
</dbReference>
<dbReference type="GO" id="GO:0003735">
    <property type="term" value="F:structural constituent of ribosome"/>
    <property type="evidence" value="ECO:0007669"/>
    <property type="project" value="InterPro"/>
</dbReference>
<dbReference type="GO" id="GO:0000049">
    <property type="term" value="F:tRNA binding"/>
    <property type="evidence" value="ECO:0007669"/>
    <property type="project" value="UniProtKB-KW"/>
</dbReference>
<dbReference type="GO" id="GO:0006412">
    <property type="term" value="P:translation"/>
    <property type="evidence" value="ECO:0007669"/>
    <property type="project" value="UniProtKB-UniRule"/>
</dbReference>
<dbReference type="CDD" id="cd01433">
    <property type="entry name" value="Ribosomal_L16_L10e"/>
    <property type="match status" value="1"/>
</dbReference>
<dbReference type="FunFam" id="3.90.1170.10:FF:000001">
    <property type="entry name" value="50S ribosomal protein L16"/>
    <property type="match status" value="1"/>
</dbReference>
<dbReference type="Gene3D" id="3.90.1170.10">
    <property type="entry name" value="Ribosomal protein L10e/L16"/>
    <property type="match status" value="1"/>
</dbReference>
<dbReference type="HAMAP" id="MF_01342">
    <property type="entry name" value="Ribosomal_uL16"/>
    <property type="match status" value="1"/>
</dbReference>
<dbReference type="InterPro" id="IPR047873">
    <property type="entry name" value="Ribosomal_uL16"/>
</dbReference>
<dbReference type="InterPro" id="IPR000114">
    <property type="entry name" value="Ribosomal_uL16_bact-type"/>
</dbReference>
<dbReference type="InterPro" id="IPR020798">
    <property type="entry name" value="Ribosomal_uL16_CS"/>
</dbReference>
<dbReference type="InterPro" id="IPR016180">
    <property type="entry name" value="Ribosomal_uL16_dom"/>
</dbReference>
<dbReference type="InterPro" id="IPR036920">
    <property type="entry name" value="Ribosomal_uL16_sf"/>
</dbReference>
<dbReference type="NCBIfam" id="TIGR01164">
    <property type="entry name" value="rplP_bact"/>
    <property type="match status" value="1"/>
</dbReference>
<dbReference type="PANTHER" id="PTHR12220">
    <property type="entry name" value="50S/60S RIBOSOMAL PROTEIN L16"/>
    <property type="match status" value="1"/>
</dbReference>
<dbReference type="PANTHER" id="PTHR12220:SF13">
    <property type="entry name" value="LARGE RIBOSOMAL SUBUNIT PROTEIN UL16M"/>
    <property type="match status" value="1"/>
</dbReference>
<dbReference type="Pfam" id="PF00252">
    <property type="entry name" value="Ribosomal_L16"/>
    <property type="match status" value="1"/>
</dbReference>
<dbReference type="PRINTS" id="PR00060">
    <property type="entry name" value="RIBOSOMALL16"/>
</dbReference>
<dbReference type="SUPFAM" id="SSF54686">
    <property type="entry name" value="Ribosomal protein L16p/L10e"/>
    <property type="match status" value="1"/>
</dbReference>
<dbReference type="PROSITE" id="PS00586">
    <property type="entry name" value="RIBOSOMAL_L16_1"/>
    <property type="match status" value="1"/>
</dbReference>
<dbReference type="PROSITE" id="PS00701">
    <property type="entry name" value="RIBOSOMAL_L16_2"/>
    <property type="match status" value="1"/>
</dbReference>
<sequence>MALSPKRVKYRKVQRGRVKGDATRCNAVDFGAYALVCLEPFWLTSRQIEAARVALNRRIKRGGKLWIRVFPDKPYSKKPAETRMGKGKGSPEYWVAVVKPGTVLFELMGVERALAEQAMLLAGSKLPIKTRFAERVQEI</sequence>
<gene>
    <name evidence="1" type="primary">rplP</name>
    <name type="ordered locus">TPASS_0196</name>
</gene>
<protein>
    <recommendedName>
        <fullName evidence="1">Large ribosomal subunit protein uL16</fullName>
    </recommendedName>
    <alternativeName>
        <fullName evidence="2">50S ribosomal protein L16</fullName>
    </alternativeName>
</protein>
<accession>B2S2E3</accession>
<keyword id="KW-0687">Ribonucleoprotein</keyword>
<keyword id="KW-0689">Ribosomal protein</keyword>
<keyword id="KW-0694">RNA-binding</keyword>
<keyword id="KW-0699">rRNA-binding</keyword>
<keyword id="KW-0820">tRNA-binding</keyword>
<feature type="chain" id="PRO_1000143045" description="Large ribosomal subunit protein uL16">
    <location>
        <begin position="1"/>
        <end position="139"/>
    </location>
</feature>